<keyword id="KW-0169">Cobalamin biosynthesis</keyword>
<keyword id="KW-0315">Glutamine amidotransferase</keyword>
<protein>
    <recommendedName>
        <fullName evidence="1">Cobyric acid synthase</fullName>
    </recommendedName>
</protein>
<sequence>MSTLMVQGTTSDAGKSTLVTALCRWLTRQGVKVVPFKPQNMALNSAVTADGGEIGRAQAVQAQACYLEPHTDMNPVLLKPNSDTGAQVIIHGRAVTTMNAVAYHGYKEIAMQAVLESHRRLGESYPVIVVEGAGSPAEINLRANDIANMGFAEAVDCPVLLIADINRGGVFAHLVGTLELLSLSEQARVKGFIINRFRGDIALLQPGLDWLEARTGKPVVGVLPYVMDLHLEAEDGLDQRQTDKVEHVLNVVVPVLPRISNHTDFDPLRLHPQVNLQFIGPGKAIPPADLIILPGSKSVRSDLNYLRNNGWDTAIARHLRYGGKLMGICGGLQMLGEQVHDPLGLEGAAGSSAGFGLLAMSTVLEAEKQLRNVRGRLTLEDAEVSGYEIHAGVTTGPALEQAAVQLDDGRCDGAQSADGQVLGTYLHGLFESPAACSALLRWAGLANVQSVDYHALRERDIERLADLVEKHLDGPLLRELCGLEAN</sequence>
<reference key="1">
    <citation type="journal article" date="2005" name="Proc. Natl. Acad. Sci. U.S.A.">
        <title>Comparison of the complete genome sequences of Pseudomonas syringae pv. syringae B728a and pv. tomato DC3000.</title>
        <authorList>
            <person name="Feil H."/>
            <person name="Feil W.S."/>
            <person name="Chain P."/>
            <person name="Larimer F."/>
            <person name="Dibartolo G."/>
            <person name="Copeland A."/>
            <person name="Lykidis A."/>
            <person name="Trong S."/>
            <person name="Nolan M."/>
            <person name="Goltsman E."/>
            <person name="Thiel J."/>
            <person name="Malfatti S."/>
            <person name="Loper J.E."/>
            <person name="Lapidus A."/>
            <person name="Detter J.C."/>
            <person name="Land M."/>
            <person name="Richardson P.M."/>
            <person name="Kyrpides N.C."/>
            <person name="Ivanova N."/>
            <person name="Lindow S.E."/>
        </authorList>
    </citation>
    <scope>NUCLEOTIDE SEQUENCE [LARGE SCALE GENOMIC DNA]</scope>
    <source>
        <strain>B728a</strain>
    </source>
</reference>
<proteinExistence type="inferred from homology"/>
<gene>
    <name evidence="1" type="primary">cobQ</name>
    <name type="ordered locus">Psyr_3676</name>
</gene>
<comment type="function">
    <text evidence="1">Catalyzes amidations at positions B, D, E, and G on adenosylcobyrinic A,C-diamide. NH(2) groups are provided by glutamine, and one molecule of ATP is hydrogenolyzed for each amidation.</text>
</comment>
<comment type="pathway">
    <text evidence="1">Cofactor biosynthesis; adenosylcobalamin biosynthesis.</text>
</comment>
<comment type="similarity">
    <text evidence="1">Belongs to the CobB/CobQ family. CobQ subfamily.</text>
</comment>
<name>COBQ_PSEU2</name>
<organism>
    <name type="scientific">Pseudomonas syringae pv. syringae (strain B728a)</name>
    <dbReference type="NCBI Taxonomy" id="205918"/>
    <lineage>
        <taxon>Bacteria</taxon>
        <taxon>Pseudomonadati</taxon>
        <taxon>Pseudomonadota</taxon>
        <taxon>Gammaproteobacteria</taxon>
        <taxon>Pseudomonadales</taxon>
        <taxon>Pseudomonadaceae</taxon>
        <taxon>Pseudomonas</taxon>
        <taxon>Pseudomonas syringae</taxon>
    </lineage>
</organism>
<dbReference type="EMBL" id="CP000075">
    <property type="protein sequence ID" value="AAY38708.1"/>
    <property type="molecule type" value="Genomic_DNA"/>
</dbReference>
<dbReference type="RefSeq" id="WP_003404269.1">
    <property type="nucleotide sequence ID" value="NC_007005.1"/>
</dbReference>
<dbReference type="RefSeq" id="YP_236746.1">
    <property type="nucleotide sequence ID" value="NC_007005.1"/>
</dbReference>
<dbReference type="SMR" id="Q4ZQ64"/>
<dbReference type="STRING" id="205918.Psyr_3676"/>
<dbReference type="KEGG" id="psb:Psyr_3676"/>
<dbReference type="PATRIC" id="fig|205918.7.peg.3777"/>
<dbReference type="eggNOG" id="COG1492">
    <property type="taxonomic scope" value="Bacteria"/>
</dbReference>
<dbReference type="HOGENOM" id="CLU_019250_2_2_6"/>
<dbReference type="OrthoDB" id="9808302at2"/>
<dbReference type="UniPathway" id="UPA00148"/>
<dbReference type="Proteomes" id="UP000000426">
    <property type="component" value="Chromosome"/>
</dbReference>
<dbReference type="GO" id="GO:0015420">
    <property type="term" value="F:ABC-type vitamin B12 transporter activity"/>
    <property type="evidence" value="ECO:0007669"/>
    <property type="project" value="UniProtKB-UniRule"/>
</dbReference>
<dbReference type="GO" id="GO:0003824">
    <property type="term" value="F:catalytic activity"/>
    <property type="evidence" value="ECO:0007669"/>
    <property type="project" value="InterPro"/>
</dbReference>
<dbReference type="GO" id="GO:0009236">
    <property type="term" value="P:cobalamin biosynthetic process"/>
    <property type="evidence" value="ECO:0007669"/>
    <property type="project" value="UniProtKB-UniRule"/>
</dbReference>
<dbReference type="CDD" id="cd05389">
    <property type="entry name" value="CobQ_N"/>
    <property type="match status" value="1"/>
</dbReference>
<dbReference type="CDD" id="cd01750">
    <property type="entry name" value="GATase1_CobQ"/>
    <property type="match status" value="1"/>
</dbReference>
<dbReference type="Gene3D" id="3.40.50.880">
    <property type="match status" value="1"/>
</dbReference>
<dbReference type="Gene3D" id="3.40.50.300">
    <property type="entry name" value="P-loop containing nucleotide triphosphate hydrolases"/>
    <property type="match status" value="1"/>
</dbReference>
<dbReference type="HAMAP" id="MF_00028">
    <property type="entry name" value="CobQ"/>
    <property type="match status" value="1"/>
</dbReference>
<dbReference type="InterPro" id="IPR029062">
    <property type="entry name" value="Class_I_gatase-like"/>
</dbReference>
<dbReference type="InterPro" id="IPR002586">
    <property type="entry name" value="CobQ/CobB/MinD/ParA_Nub-bd_dom"/>
</dbReference>
<dbReference type="InterPro" id="IPR033949">
    <property type="entry name" value="CobQ_GATase1"/>
</dbReference>
<dbReference type="InterPro" id="IPR047045">
    <property type="entry name" value="CobQ_N"/>
</dbReference>
<dbReference type="InterPro" id="IPR004459">
    <property type="entry name" value="CobQ_synth"/>
</dbReference>
<dbReference type="InterPro" id="IPR011698">
    <property type="entry name" value="GATase_3"/>
</dbReference>
<dbReference type="InterPro" id="IPR027417">
    <property type="entry name" value="P-loop_NTPase"/>
</dbReference>
<dbReference type="NCBIfam" id="TIGR00313">
    <property type="entry name" value="cobQ"/>
    <property type="match status" value="1"/>
</dbReference>
<dbReference type="NCBIfam" id="NF001989">
    <property type="entry name" value="PRK00784.1"/>
    <property type="match status" value="1"/>
</dbReference>
<dbReference type="PANTHER" id="PTHR21343:SF1">
    <property type="entry name" value="COBYRIC ACID SYNTHASE"/>
    <property type="match status" value="1"/>
</dbReference>
<dbReference type="PANTHER" id="PTHR21343">
    <property type="entry name" value="DETHIOBIOTIN SYNTHETASE"/>
    <property type="match status" value="1"/>
</dbReference>
<dbReference type="Pfam" id="PF01656">
    <property type="entry name" value="CbiA"/>
    <property type="match status" value="1"/>
</dbReference>
<dbReference type="Pfam" id="PF07685">
    <property type="entry name" value="GATase_3"/>
    <property type="match status" value="1"/>
</dbReference>
<dbReference type="SUPFAM" id="SSF52317">
    <property type="entry name" value="Class I glutamine amidotransferase-like"/>
    <property type="match status" value="1"/>
</dbReference>
<dbReference type="SUPFAM" id="SSF52540">
    <property type="entry name" value="P-loop containing nucleoside triphosphate hydrolases"/>
    <property type="match status" value="1"/>
</dbReference>
<dbReference type="PROSITE" id="PS51274">
    <property type="entry name" value="GATASE_COBBQ"/>
    <property type="match status" value="1"/>
</dbReference>
<feature type="chain" id="PRO_0000332377" description="Cobyric acid synthase">
    <location>
        <begin position="1"/>
        <end position="486"/>
    </location>
</feature>
<feature type="domain" description="GATase cobBQ-type" evidence="1">
    <location>
        <begin position="248"/>
        <end position="435"/>
    </location>
</feature>
<feature type="active site" description="Nucleophile" evidence="1">
    <location>
        <position position="329"/>
    </location>
</feature>
<feature type="active site" evidence="1">
    <location>
        <position position="427"/>
    </location>
</feature>
<evidence type="ECO:0000255" key="1">
    <source>
        <dbReference type="HAMAP-Rule" id="MF_00028"/>
    </source>
</evidence>
<accession>Q4ZQ64</accession>